<comment type="function">
    <text evidence="1">Converts GTP to 7,8-dihydroneopterin triphosphate.</text>
</comment>
<comment type="catalytic activity">
    <reaction evidence="1">
        <text>GTP + H2O = 7,8-dihydroneopterin 3'-triphosphate + formate + H(+)</text>
        <dbReference type="Rhea" id="RHEA:17473"/>
        <dbReference type="ChEBI" id="CHEBI:15377"/>
        <dbReference type="ChEBI" id="CHEBI:15378"/>
        <dbReference type="ChEBI" id="CHEBI:15740"/>
        <dbReference type="ChEBI" id="CHEBI:37565"/>
        <dbReference type="ChEBI" id="CHEBI:58462"/>
        <dbReference type="EC" id="3.5.4.16"/>
    </reaction>
</comment>
<comment type="pathway">
    <text evidence="1">Cofactor biosynthesis; 7,8-dihydroneopterin triphosphate biosynthesis; 7,8-dihydroneopterin triphosphate from GTP: step 1/1.</text>
</comment>
<comment type="similarity">
    <text evidence="1">Belongs to the GTP cyclohydrolase IV family.</text>
</comment>
<protein>
    <recommendedName>
        <fullName evidence="1">GTP cyclohydrolase FolE2</fullName>
        <ecNumber evidence="1">3.5.4.16</ecNumber>
    </recommendedName>
</protein>
<sequence length="304" mass="32972">MQEPKNSQTLHDVANGASDLEGPLAWVGMEDIALPFRLANSAVNGRASAGVSLDATSARGIHMSRLYLALEALEHEEVTLSGLGAVLQRFLASHDGLARTAFLDLSGDVLIKRPALISPRAGWKAYPCALRCRQDTQGMQAVLEVTIGYSSTCPCSAALARQSIQQAFDEDFTDMPISHEAVRTWLGSEQGILATPHSQRSQAHLSLRLADDLETLPVTALIDTVEDALGTALQTAVKRVDEQAFALANGQNLMFCEDAARRVRHALQARDEVQGFRVRIVHAESLHAHDAVAHAEWNWTPNSP</sequence>
<dbReference type="EC" id="3.5.4.16" evidence="1"/>
<dbReference type="EMBL" id="CP000285">
    <property type="protein sequence ID" value="ABE57555.1"/>
    <property type="molecule type" value="Genomic_DNA"/>
</dbReference>
<dbReference type="RefSeq" id="WP_011505501.1">
    <property type="nucleotide sequence ID" value="NC_007963.1"/>
</dbReference>
<dbReference type="SMR" id="Q1R153"/>
<dbReference type="STRING" id="290398.Csal_0191"/>
<dbReference type="GeneID" id="95332940"/>
<dbReference type="KEGG" id="csa:Csal_0191"/>
<dbReference type="eggNOG" id="COG1469">
    <property type="taxonomic scope" value="Bacteria"/>
</dbReference>
<dbReference type="HOGENOM" id="CLU_062816_0_0_6"/>
<dbReference type="OrthoDB" id="239637at2"/>
<dbReference type="UniPathway" id="UPA00848">
    <property type="reaction ID" value="UER00151"/>
</dbReference>
<dbReference type="Proteomes" id="UP000000239">
    <property type="component" value="Chromosome"/>
</dbReference>
<dbReference type="GO" id="GO:0003934">
    <property type="term" value="F:GTP cyclohydrolase I activity"/>
    <property type="evidence" value="ECO:0007669"/>
    <property type="project" value="UniProtKB-UniRule"/>
</dbReference>
<dbReference type="GO" id="GO:0046654">
    <property type="term" value="P:tetrahydrofolate biosynthetic process"/>
    <property type="evidence" value="ECO:0007669"/>
    <property type="project" value="UniProtKB-UniRule"/>
</dbReference>
<dbReference type="Gene3D" id="3.10.270.10">
    <property type="entry name" value="Urate Oxidase"/>
    <property type="match status" value="1"/>
</dbReference>
<dbReference type="HAMAP" id="MF_01527_B">
    <property type="entry name" value="GTP_cyclohydrol_B"/>
    <property type="match status" value="1"/>
</dbReference>
<dbReference type="InterPro" id="IPR022838">
    <property type="entry name" value="GTP_cyclohydrolase_FolE2"/>
</dbReference>
<dbReference type="InterPro" id="IPR003801">
    <property type="entry name" value="GTP_cyclohydrolase_FolE2/MptA"/>
</dbReference>
<dbReference type="NCBIfam" id="NF010200">
    <property type="entry name" value="PRK13674.1-1"/>
    <property type="match status" value="1"/>
</dbReference>
<dbReference type="PANTHER" id="PTHR36445">
    <property type="entry name" value="GTP CYCLOHYDROLASE MPTA"/>
    <property type="match status" value="1"/>
</dbReference>
<dbReference type="PANTHER" id="PTHR36445:SF1">
    <property type="entry name" value="GTP CYCLOHYDROLASE MPTA"/>
    <property type="match status" value="1"/>
</dbReference>
<dbReference type="Pfam" id="PF02649">
    <property type="entry name" value="GCHY-1"/>
    <property type="match status" value="1"/>
</dbReference>
<feature type="chain" id="PRO_0000289485" description="GTP cyclohydrolase FolE2">
    <location>
        <begin position="1"/>
        <end position="304"/>
    </location>
</feature>
<feature type="site" description="May be catalytically important" evidence="1">
    <location>
        <position position="153"/>
    </location>
</feature>
<evidence type="ECO:0000255" key="1">
    <source>
        <dbReference type="HAMAP-Rule" id="MF_01527"/>
    </source>
</evidence>
<name>GCH4_CHRSD</name>
<reference key="1">
    <citation type="journal article" date="2011" name="Stand. Genomic Sci.">
        <title>Complete genome sequence of the halophilic and highly halotolerant Chromohalobacter salexigens type strain (1H11(T)).</title>
        <authorList>
            <person name="Copeland A."/>
            <person name="O'Connor K."/>
            <person name="Lucas S."/>
            <person name="Lapidus A."/>
            <person name="Berry K.W."/>
            <person name="Detter J.C."/>
            <person name="Del Rio T.G."/>
            <person name="Hammon N."/>
            <person name="Dalin E."/>
            <person name="Tice H."/>
            <person name="Pitluck S."/>
            <person name="Bruce D."/>
            <person name="Goodwin L."/>
            <person name="Han C."/>
            <person name="Tapia R."/>
            <person name="Saunders E."/>
            <person name="Schmutz J."/>
            <person name="Brettin T."/>
            <person name="Larimer F."/>
            <person name="Land M."/>
            <person name="Hauser L."/>
            <person name="Vargas C."/>
            <person name="Nieto J.J."/>
            <person name="Kyrpides N.C."/>
            <person name="Ivanova N."/>
            <person name="Goker M."/>
            <person name="Klenk H.P."/>
            <person name="Csonka L.N."/>
            <person name="Woyke T."/>
        </authorList>
    </citation>
    <scope>NUCLEOTIDE SEQUENCE [LARGE SCALE GENOMIC DNA]</scope>
    <source>
        <strain>ATCC BAA-138 / DSM 3043 / CIP 106854 / NCIMB 13768 / 1H11</strain>
    </source>
</reference>
<organism>
    <name type="scientific">Chromohalobacter salexigens (strain ATCC BAA-138 / DSM 3043 / CIP 106854 / NCIMB 13768 / 1H11)</name>
    <dbReference type="NCBI Taxonomy" id="290398"/>
    <lineage>
        <taxon>Bacteria</taxon>
        <taxon>Pseudomonadati</taxon>
        <taxon>Pseudomonadota</taxon>
        <taxon>Gammaproteobacteria</taxon>
        <taxon>Oceanospirillales</taxon>
        <taxon>Halomonadaceae</taxon>
        <taxon>Chromohalobacter</taxon>
    </lineage>
</organism>
<gene>
    <name evidence="1" type="primary">folE2</name>
    <name type="ordered locus">Csal_0191</name>
</gene>
<proteinExistence type="inferred from homology"/>
<keyword id="KW-0378">Hydrolase</keyword>
<keyword id="KW-1185">Reference proteome</keyword>
<accession>Q1R153</accession>